<keyword id="KW-0007">Acetylation</keyword>
<keyword id="KW-0025">Alternative splicing</keyword>
<keyword id="KW-0053">Apoptosis</keyword>
<keyword id="KW-1003">Cell membrane</keyword>
<keyword id="KW-0143">Chaperone</keyword>
<keyword id="KW-0963">Cytoplasm</keyword>
<keyword id="KW-0472">Membrane</keyword>
<keyword id="KW-0479">Metal-binding</keyword>
<keyword id="KW-0488">Methylation</keyword>
<keyword id="KW-0496">Mitochondrion</keyword>
<keyword id="KW-0597">Phosphoprotein</keyword>
<keyword id="KW-0628">Postsynaptic cell membrane</keyword>
<keyword id="KW-1185">Reference proteome</keyword>
<keyword id="KW-0677">Repeat</keyword>
<keyword id="KW-0770">Synapse</keyword>
<keyword id="KW-0809">Transit peptide</keyword>
<keyword id="KW-0862">Zinc</keyword>
<keyword id="KW-0863">Zinc-finger</keyword>
<gene>
    <name type="primary">Dnaja3</name>
    <name type="synonym">Tid1</name>
</gene>
<comment type="function">
    <text evidence="1 6">Modulates apoptotic signal transduction or effector structures within the mitochondrial matrix. Affect cytochrome C release from the mitochondria and caspase 3 activation, but not caspase 8 activation. Isoform 1 increases apoptosis triggered by both TNF and the DNA-damaging agent mytomycin C; in sharp contrast, isoform 2 suppresses apoptosis. Can modulate IFN-gamma-mediated transcriptional activity (By similarity). Isoform 2 may play a role in neuromuscular junction development as an effector of the MUSK signaling pathway.</text>
</comment>
<comment type="subunit">
    <text evidence="5 6">Interacts with JAK2, HSPA9B and IFN-gammaR2 chain. Interacts with Ras GTPase-activating protein 1 (RASA1). Isoform 2 interacts with MUSK (via the cytoplasmic domain).</text>
</comment>
<comment type="subcellular location">
    <subcellularLocation>
        <location evidence="1">Mitochondrion matrix</location>
    </subcellularLocation>
    <subcellularLocation>
        <location evidence="6">Cytoplasm</location>
        <location evidence="6">Cytosol</location>
    </subcellularLocation>
    <subcellularLocation>
        <location evidence="6">Postsynaptic cell membrane</location>
        <topology evidence="6">Peripheral membrane protein</topology>
    </subcellularLocation>
    <text>Recruited to the postsynaptic cell membrane of the neuromuscular junction through interaction with MUSK.</text>
</comment>
<comment type="alternative products">
    <event type="alternative splicing"/>
    <isoform>
        <id>Q99M87-1</id>
        <name>1</name>
        <name>Tid-1L</name>
        <name>TID1L</name>
        <sequence type="displayed"/>
    </isoform>
    <isoform>
        <id>Q99M87-2</id>
        <name>2</name>
        <name>Tid-1S</name>
        <name>TID1S</name>
        <sequence type="described" ref="VSP_007427 VSP_007428"/>
    </isoform>
    <isoform>
        <id>Q99M87-3</id>
        <name>3</name>
        <sequence type="described" ref="VSP_007440"/>
    </isoform>
</comment>
<comment type="domain">
    <text evidence="1">Modulation of apoptosis, i.e. proapoptotic activity of isoform 1 and antiapoptotic activity of isoform 2, is J domain-dependent (By similarity).</text>
</comment>
<comment type="PTM">
    <text>Tyrosine phosphorylated.</text>
</comment>
<sequence length="480" mass="52443">MAAWCSPRWLRVAVGTPRLPAAAGRGVQQPQGGVVATSLCRKLCVSAFGLSMGAHGPRALLTLRPGVRLTGTKSFPFVCTTSFHTSASLAKDDYYQILGVPRNASQKDIKKAYYQLAKKYHPDTNKDDPKAKEKFSQLAEAYEVLSDEVKRKQYDAYGSAGFDPGTSSSGQGYWRGGPSVDPEELFRKIFGEFSSSPFGDFQNVFDQPQEYIMELTFNQAAKGVNKEFTVNIMDTCERCDGKGNEPGTKVQHCHYCGGSGMETINTGPFVMRSTCRRCGGRGSIITNPCVVCRGAGQAKQKKRVTIPVPAGVEDGQTVRMPVGKREIFVTFRVQKSPVFRRDGADIHSDLFISIAQAILGGTAKAQGLYETINVTIPAGIQTDQKIRLTGKGIPRINSYGYGDHYIHIKIRVPKRLSSRQQNLILSYAEDETDVEGTVNGVTHTSTGGRTMDSSAGSKDRREAGEDNEGFLSKLKKIFTS</sequence>
<organism>
    <name type="scientific">Mus musculus</name>
    <name type="common">Mouse</name>
    <dbReference type="NCBI Taxonomy" id="10090"/>
    <lineage>
        <taxon>Eukaryota</taxon>
        <taxon>Metazoa</taxon>
        <taxon>Chordata</taxon>
        <taxon>Craniata</taxon>
        <taxon>Vertebrata</taxon>
        <taxon>Euteleostomi</taxon>
        <taxon>Mammalia</taxon>
        <taxon>Eutheria</taxon>
        <taxon>Euarchontoglires</taxon>
        <taxon>Glires</taxon>
        <taxon>Rodentia</taxon>
        <taxon>Myomorpha</taxon>
        <taxon>Muroidea</taxon>
        <taxon>Muridae</taxon>
        <taxon>Murinae</taxon>
        <taxon>Mus</taxon>
        <taxon>Mus</taxon>
    </lineage>
</organism>
<feature type="transit peptide" description="Mitochondrion" evidence="3">
    <location>
        <begin position="1"/>
        <end status="unknown"/>
    </location>
</feature>
<feature type="chain" id="PRO_0000007257" description="DnaJ homolog subfamily A member 3, mitochondrial">
    <location>
        <begin status="unknown"/>
        <end position="480"/>
    </location>
</feature>
<feature type="domain" description="J">
    <location>
        <begin position="93"/>
        <end position="158"/>
    </location>
</feature>
<feature type="repeat" description="CXXCXGXG motif">
    <location>
        <begin position="236"/>
        <end position="243"/>
    </location>
</feature>
<feature type="repeat" description="CXXCXGXG motif">
    <location>
        <begin position="253"/>
        <end position="260"/>
    </location>
</feature>
<feature type="repeat" description="CXXCXGXG motif">
    <location>
        <begin position="275"/>
        <end position="282"/>
    </location>
</feature>
<feature type="repeat" description="CXXCXGXG motif">
    <location>
        <begin position="289"/>
        <end position="296"/>
    </location>
</feature>
<feature type="zinc finger region" description="CR-type">
    <location>
        <begin position="223"/>
        <end position="301"/>
    </location>
</feature>
<feature type="region of interest" description="Disordered" evidence="4">
    <location>
        <begin position="437"/>
        <end position="468"/>
    </location>
</feature>
<feature type="compositionally biased region" description="Polar residues" evidence="4">
    <location>
        <begin position="439"/>
        <end position="456"/>
    </location>
</feature>
<feature type="binding site" evidence="1">
    <location>
        <position position="236"/>
    </location>
    <ligand>
        <name>Zn(2+)</name>
        <dbReference type="ChEBI" id="CHEBI:29105"/>
        <label>1</label>
    </ligand>
</feature>
<feature type="binding site" evidence="1">
    <location>
        <position position="239"/>
    </location>
    <ligand>
        <name>Zn(2+)</name>
        <dbReference type="ChEBI" id="CHEBI:29105"/>
        <label>1</label>
    </ligand>
</feature>
<feature type="binding site" evidence="1">
    <location>
        <position position="253"/>
    </location>
    <ligand>
        <name>Zn(2+)</name>
        <dbReference type="ChEBI" id="CHEBI:29105"/>
        <label>2</label>
    </ligand>
</feature>
<feature type="binding site" evidence="1">
    <location>
        <position position="256"/>
    </location>
    <ligand>
        <name>Zn(2+)</name>
        <dbReference type="ChEBI" id="CHEBI:29105"/>
        <label>2</label>
    </ligand>
</feature>
<feature type="binding site" evidence="1">
    <location>
        <position position="275"/>
    </location>
    <ligand>
        <name>Zn(2+)</name>
        <dbReference type="ChEBI" id="CHEBI:29105"/>
        <label>2</label>
    </ligand>
</feature>
<feature type="binding site" evidence="1">
    <location>
        <position position="278"/>
    </location>
    <ligand>
        <name>Zn(2+)</name>
        <dbReference type="ChEBI" id="CHEBI:29105"/>
        <label>2</label>
    </ligand>
</feature>
<feature type="binding site" evidence="1">
    <location>
        <position position="289"/>
    </location>
    <ligand>
        <name>Zn(2+)</name>
        <dbReference type="ChEBI" id="CHEBI:29105"/>
        <label>1</label>
    </ligand>
</feature>
<feature type="binding site" evidence="1">
    <location>
        <position position="292"/>
    </location>
    <ligand>
        <name>Zn(2+)</name>
        <dbReference type="ChEBI" id="CHEBI:29105"/>
        <label>1</label>
    </ligand>
</feature>
<feature type="modified residue" description="Omega-N-methylarginine; by CARM1" evidence="2">
    <location>
        <position position="58"/>
    </location>
</feature>
<feature type="modified residue" description="N6-acetyllysine" evidence="11">
    <location>
        <position position="134"/>
    </location>
</feature>
<feature type="modified residue" description="Omega-N-methylarginine; by CARM1" evidence="2">
    <location>
        <position position="238"/>
    </location>
</feature>
<feature type="modified residue" description="Omega-N-methylarginine; by CARM1" evidence="2">
    <location>
        <position position="293"/>
    </location>
</feature>
<feature type="modified residue" description="Phosphoserine" evidence="2">
    <location>
        <position position="398"/>
    </location>
</feature>
<feature type="splice variant" id="VSP_007440" description="In isoform 3." evidence="7">
    <location>
        <begin position="211"/>
        <end position="261"/>
    </location>
</feature>
<feature type="splice variant" id="VSP_007427" description="In isoform 2." evidence="7 8 9">
    <original>GRTMDS</original>
    <variation>KRSTGN</variation>
    <location>
        <begin position="448"/>
        <end position="453"/>
    </location>
</feature>
<feature type="splice variant" id="VSP_007428" description="In isoform 2." evidence="7 8 9">
    <location>
        <begin position="454"/>
        <end position="480"/>
    </location>
</feature>
<feature type="sequence conflict" description="In Ref. 2; BAB23661." evidence="10" ref="2">
    <original>D</original>
    <variation>H</variation>
    <location>
        <position position="403"/>
    </location>
</feature>
<feature type="sequence conflict" description="In Ref. 2; BAB23384." evidence="10" ref="2">
    <original>G</original>
    <variation>E</variation>
    <location>
        <position position="456"/>
    </location>
</feature>
<reference key="1">
    <citation type="journal article" date="2001" name="J. Biol. Chem.">
        <title>A mouse homologue of the Drosophila tumor suppressor l(2)tid gene defines a novel Ras GTPase-activating protein (RasGAP)-binding protein.</title>
        <authorList>
            <person name="Trentin G.A."/>
            <person name="Yin X."/>
            <person name="Tahir S."/>
            <person name="Lhotak S."/>
            <person name="Farhang-Fallah J."/>
            <person name="Li Y."/>
            <person name="Rozakis-Adcock M."/>
        </authorList>
    </citation>
    <scope>NUCLEOTIDE SEQUENCE [MRNA] (ISOFORMS 1; 2 AND 3)</scope>
    <scope>INTERACTION WITH RASA1</scope>
    <source>
        <strain>C57BL/6 X CBA</strain>
    </source>
</reference>
<reference key="2">
    <citation type="journal article" date="2005" name="Science">
        <title>The transcriptional landscape of the mammalian genome.</title>
        <authorList>
            <person name="Carninci P."/>
            <person name="Kasukawa T."/>
            <person name="Katayama S."/>
            <person name="Gough J."/>
            <person name="Frith M.C."/>
            <person name="Maeda N."/>
            <person name="Oyama R."/>
            <person name="Ravasi T."/>
            <person name="Lenhard B."/>
            <person name="Wells C."/>
            <person name="Kodzius R."/>
            <person name="Shimokawa K."/>
            <person name="Bajic V.B."/>
            <person name="Brenner S.E."/>
            <person name="Batalov S."/>
            <person name="Forrest A.R."/>
            <person name="Zavolan M."/>
            <person name="Davis M.J."/>
            <person name="Wilming L.G."/>
            <person name="Aidinis V."/>
            <person name="Allen J.E."/>
            <person name="Ambesi-Impiombato A."/>
            <person name="Apweiler R."/>
            <person name="Aturaliya R.N."/>
            <person name="Bailey T.L."/>
            <person name="Bansal M."/>
            <person name="Baxter L."/>
            <person name="Beisel K.W."/>
            <person name="Bersano T."/>
            <person name="Bono H."/>
            <person name="Chalk A.M."/>
            <person name="Chiu K.P."/>
            <person name="Choudhary V."/>
            <person name="Christoffels A."/>
            <person name="Clutterbuck D.R."/>
            <person name="Crowe M.L."/>
            <person name="Dalla E."/>
            <person name="Dalrymple B.P."/>
            <person name="de Bono B."/>
            <person name="Della Gatta G."/>
            <person name="di Bernardo D."/>
            <person name="Down T."/>
            <person name="Engstrom P."/>
            <person name="Fagiolini M."/>
            <person name="Faulkner G."/>
            <person name="Fletcher C.F."/>
            <person name="Fukushima T."/>
            <person name="Furuno M."/>
            <person name="Futaki S."/>
            <person name="Gariboldi M."/>
            <person name="Georgii-Hemming P."/>
            <person name="Gingeras T.R."/>
            <person name="Gojobori T."/>
            <person name="Green R.E."/>
            <person name="Gustincich S."/>
            <person name="Harbers M."/>
            <person name="Hayashi Y."/>
            <person name="Hensch T.K."/>
            <person name="Hirokawa N."/>
            <person name="Hill D."/>
            <person name="Huminiecki L."/>
            <person name="Iacono M."/>
            <person name="Ikeo K."/>
            <person name="Iwama A."/>
            <person name="Ishikawa T."/>
            <person name="Jakt M."/>
            <person name="Kanapin A."/>
            <person name="Katoh M."/>
            <person name="Kawasawa Y."/>
            <person name="Kelso J."/>
            <person name="Kitamura H."/>
            <person name="Kitano H."/>
            <person name="Kollias G."/>
            <person name="Krishnan S.P."/>
            <person name="Kruger A."/>
            <person name="Kummerfeld S.K."/>
            <person name="Kurochkin I.V."/>
            <person name="Lareau L.F."/>
            <person name="Lazarevic D."/>
            <person name="Lipovich L."/>
            <person name="Liu J."/>
            <person name="Liuni S."/>
            <person name="McWilliam S."/>
            <person name="Madan Babu M."/>
            <person name="Madera M."/>
            <person name="Marchionni L."/>
            <person name="Matsuda H."/>
            <person name="Matsuzawa S."/>
            <person name="Miki H."/>
            <person name="Mignone F."/>
            <person name="Miyake S."/>
            <person name="Morris K."/>
            <person name="Mottagui-Tabar S."/>
            <person name="Mulder N."/>
            <person name="Nakano N."/>
            <person name="Nakauchi H."/>
            <person name="Ng P."/>
            <person name="Nilsson R."/>
            <person name="Nishiguchi S."/>
            <person name="Nishikawa S."/>
            <person name="Nori F."/>
            <person name="Ohara O."/>
            <person name="Okazaki Y."/>
            <person name="Orlando V."/>
            <person name="Pang K.C."/>
            <person name="Pavan W.J."/>
            <person name="Pavesi G."/>
            <person name="Pesole G."/>
            <person name="Petrovsky N."/>
            <person name="Piazza S."/>
            <person name="Reed J."/>
            <person name="Reid J.F."/>
            <person name="Ring B.Z."/>
            <person name="Ringwald M."/>
            <person name="Rost B."/>
            <person name="Ruan Y."/>
            <person name="Salzberg S.L."/>
            <person name="Sandelin A."/>
            <person name="Schneider C."/>
            <person name="Schoenbach C."/>
            <person name="Sekiguchi K."/>
            <person name="Semple C.A."/>
            <person name="Seno S."/>
            <person name="Sessa L."/>
            <person name="Sheng Y."/>
            <person name="Shibata Y."/>
            <person name="Shimada H."/>
            <person name="Shimada K."/>
            <person name="Silva D."/>
            <person name="Sinclair B."/>
            <person name="Sperling S."/>
            <person name="Stupka E."/>
            <person name="Sugiura K."/>
            <person name="Sultana R."/>
            <person name="Takenaka Y."/>
            <person name="Taki K."/>
            <person name="Tammoja K."/>
            <person name="Tan S.L."/>
            <person name="Tang S."/>
            <person name="Taylor M.S."/>
            <person name="Tegner J."/>
            <person name="Teichmann S.A."/>
            <person name="Ueda H.R."/>
            <person name="van Nimwegen E."/>
            <person name="Verardo R."/>
            <person name="Wei C.L."/>
            <person name="Yagi K."/>
            <person name="Yamanishi H."/>
            <person name="Zabarovsky E."/>
            <person name="Zhu S."/>
            <person name="Zimmer A."/>
            <person name="Hide W."/>
            <person name="Bult C."/>
            <person name="Grimmond S.M."/>
            <person name="Teasdale R.D."/>
            <person name="Liu E.T."/>
            <person name="Brusic V."/>
            <person name="Quackenbush J."/>
            <person name="Wahlestedt C."/>
            <person name="Mattick J.S."/>
            <person name="Hume D.A."/>
            <person name="Kai C."/>
            <person name="Sasaki D."/>
            <person name="Tomaru Y."/>
            <person name="Fukuda S."/>
            <person name="Kanamori-Katayama M."/>
            <person name="Suzuki M."/>
            <person name="Aoki J."/>
            <person name="Arakawa T."/>
            <person name="Iida J."/>
            <person name="Imamura K."/>
            <person name="Itoh M."/>
            <person name="Kato T."/>
            <person name="Kawaji H."/>
            <person name="Kawagashira N."/>
            <person name="Kawashima T."/>
            <person name="Kojima M."/>
            <person name="Kondo S."/>
            <person name="Konno H."/>
            <person name="Nakano K."/>
            <person name="Ninomiya N."/>
            <person name="Nishio T."/>
            <person name="Okada M."/>
            <person name="Plessy C."/>
            <person name="Shibata K."/>
            <person name="Shiraki T."/>
            <person name="Suzuki S."/>
            <person name="Tagami M."/>
            <person name="Waki K."/>
            <person name="Watahiki A."/>
            <person name="Okamura-Oho Y."/>
            <person name="Suzuki H."/>
            <person name="Kawai J."/>
            <person name="Hayashizaki Y."/>
        </authorList>
    </citation>
    <scope>NUCLEOTIDE SEQUENCE [LARGE SCALE MRNA] (ISOFORMS 1 AND 2)</scope>
    <source>
        <strain>C57BL/6J</strain>
        <tissue>Embryo</tissue>
        <tissue>Forelimb</tissue>
        <tissue>Lung</tissue>
    </source>
</reference>
<reference key="3">
    <citation type="journal article" date="2004" name="Genome Res.">
        <title>The status, quality, and expansion of the NIH full-length cDNA project: the Mammalian Gene Collection (MGC).</title>
        <authorList>
            <consortium name="The MGC Project Team"/>
        </authorList>
    </citation>
    <scope>NUCLEOTIDE SEQUENCE [LARGE SCALE MRNA] (ISOFORM 2)</scope>
</reference>
<reference key="4">
    <citation type="journal article" date="2008" name="Neuron">
        <title>A mammalian homolog of Drosophila tumorous imaginal discs, Tid1, mediates agrin signaling at the neuromuscular junction.</title>
        <authorList>
            <person name="Linnoila J."/>
            <person name="Wang Y."/>
            <person name="Yao Y."/>
            <person name="Wang Z.Z."/>
        </authorList>
    </citation>
    <scope>FUNCTION IN NEUROMUSCULAR JUNCTION DEVELOPMENT</scope>
    <scope>INTERACTION WITH MUSK</scope>
    <scope>SUBCELLULAR LOCATION</scope>
</reference>
<reference key="5">
    <citation type="journal article" date="2010" name="Cell">
        <title>A tissue-specific atlas of mouse protein phosphorylation and expression.</title>
        <authorList>
            <person name="Huttlin E.L."/>
            <person name="Jedrychowski M.P."/>
            <person name="Elias J.E."/>
            <person name="Goswami T."/>
            <person name="Rad R."/>
            <person name="Beausoleil S.A."/>
            <person name="Villen J."/>
            <person name="Haas W."/>
            <person name="Sowa M.E."/>
            <person name="Gygi S.P."/>
        </authorList>
    </citation>
    <scope>IDENTIFICATION BY MASS SPECTROMETRY [LARGE SCALE ANALYSIS]</scope>
    <source>
        <tissue>Brown adipose tissue</tissue>
        <tissue>Heart</tissue>
        <tissue>Kidney</tissue>
        <tissue>Liver</tissue>
        <tissue>Pancreas</tissue>
    </source>
</reference>
<reference key="6">
    <citation type="journal article" date="2013" name="Proc. Natl. Acad. Sci. U.S.A.">
        <title>Label-free quantitative proteomics of the lysine acetylome in mitochondria identifies substrates of SIRT3 in metabolic pathways.</title>
        <authorList>
            <person name="Rardin M.J."/>
            <person name="Newman J.C."/>
            <person name="Held J.M."/>
            <person name="Cusack M.P."/>
            <person name="Sorensen D.J."/>
            <person name="Li B."/>
            <person name="Schilling B."/>
            <person name="Mooney S.D."/>
            <person name="Kahn C.R."/>
            <person name="Verdin E."/>
            <person name="Gibson B.W."/>
        </authorList>
    </citation>
    <scope>ACETYLATION [LARGE SCALE ANALYSIS] AT LYS-134</scope>
    <scope>IDENTIFICATION BY MASS SPECTROMETRY [LARGE SCALE ANALYSIS]</scope>
    <source>
        <tissue>Liver</tissue>
    </source>
</reference>
<accession>Q99M87</accession>
<accession>Q8BSM0</accession>
<accession>Q99L09</accession>
<accession>Q99P71</accession>
<accession>Q99P76</accession>
<accession>Q9CT11</accession>
<accession>Q9DBJ7</accession>
<accession>Q9DC44</accession>
<proteinExistence type="evidence at protein level"/>
<dbReference type="EMBL" id="AY009320">
    <property type="protein sequence ID" value="AAG37303.1"/>
    <property type="molecule type" value="mRNA"/>
</dbReference>
<dbReference type="EMBL" id="AF325535">
    <property type="protein sequence ID" value="AAK11222.1"/>
    <property type="molecule type" value="mRNA"/>
</dbReference>
<dbReference type="EMBL" id="AF326358">
    <property type="protein sequence ID" value="AAK11223.1"/>
    <property type="molecule type" value="mRNA"/>
</dbReference>
<dbReference type="EMBL" id="AK004575">
    <property type="protein sequence ID" value="BAB23384.1"/>
    <property type="molecule type" value="mRNA"/>
</dbReference>
<dbReference type="EMBL" id="AK004910">
    <property type="protein sequence ID" value="BAB23661.1"/>
    <property type="molecule type" value="mRNA"/>
</dbReference>
<dbReference type="EMBL" id="AK011535">
    <property type="protein sequence ID" value="BAB27682.2"/>
    <property type="molecule type" value="mRNA"/>
</dbReference>
<dbReference type="EMBL" id="AK031250">
    <property type="protein sequence ID" value="BAC27321.1"/>
    <property type="molecule type" value="mRNA"/>
</dbReference>
<dbReference type="EMBL" id="BC003920">
    <property type="protein sequence ID" value="AAH03920.1"/>
    <property type="molecule type" value="mRNA"/>
</dbReference>
<dbReference type="EMBL" id="BC027240">
    <property type="protein sequence ID" value="AAH27240.1"/>
    <property type="molecule type" value="mRNA"/>
</dbReference>
<dbReference type="CCDS" id="CCDS27922.1">
    <molecule id="Q99M87-1"/>
</dbReference>
<dbReference type="CCDS" id="CCDS49748.1">
    <molecule id="Q99M87-2"/>
</dbReference>
<dbReference type="RefSeq" id="NP_001128584.1">
    <molecule id="Q99M87-2"/>
    <property type="nucleotide sequence ID" value="NM_001135112.1"/>
</dbReference>
<dbReference type="RefSeq" id="NP_076135.3">
    <molecule id="Q99M87-1"/>
    <property type="nucleotide sequence ID" value="NM_023646.4"/>
</dbReference>
<dbReference type="SMR" id="Q99M87"/>
<dbReference type="BioGRID" id="219986">
    <property type="interactions" value="21"/>
</dbReference>
<dbReference type="FunCoup" id="Q99M87">
    <property type="interactions" value="2659"/>
</dbReference>
<dbReference type="IntAct" id="Q99M87">
    <property type="interactions" value="6"/>
</dbReference>
<dbReference type="MINT" id="Q99M87"/>
<dbReference type="STRING" id="10090.ENSMUSP00000053842"/>
<dbReference type="GlyGen" id="Q99M87">
    <property type="glycosylation" value="1 site, 1 O-linked glycan (1 site)"/>
</dbReference>
<dbReference type="iPTMnet" id="Q99M87"/>
<dbReference type="PhosphoSitePlus" id="Q99M87"/>
<dbReference type="SwissPalm" id="Q99M87"/>
<dbReference type="jPOST" id="Q99M87"/>
<dbReference type="PaxDb" id="10090-ENSMUSP00000053842"/>
<dbReference type="PeptideAtlas" id="Q99M87"/>
<dbReference type="ProteomicsDB" id="277475">
    <molecule id="Q99M87-1"/>
</dbReference>
<dbReference type="ProteomicsDB" id="277476">
    <molecule id="Q99M87-2"/>
</dbReference>
<dbReference type="ProteomicsDB" id="277477">
    <molecule id="Q99M87-3"/>
</dbReference>
<dbReference type="Pumba" id="Q99M87"/>
<dbReference type="Antibodypedia" id="24319">
    <property type="antibodies" value="270 antibodies from 33 providers"/>
</dbReference>
<dbReference type="DNASU" id="83945"/>
<dbReference type="Ensembl" id="ENSMUST00000060067.12">
    <molecule id="Q99M87-1"/>
    <property type="protein sequence ID" value="ENSMUSP00000053842.6"/>
    <property type="gene ID" value="ENSMUSG00000004069.18"/>
</dbReference>
<dbReference type="Ensembl" id="ENSMUST00000115854.4">
    <molecule id="Q99M87-2"/>
    <property type="protein sequence ID" value="ENSMUSP00000111520.4"/>
    <property type="gene ID" value="ENSMUSG00000004069.18"/>
</dbReference>
<dbReference type="Ensembl" id="ENSMUST00000229529.2">
    <molecule id="Q99M87-3"/>
    <property type="protein sequence ID" value="ENSMUSP00000155588.2"/>
    <property type="gene ID" value="ENSMUSG00000004069.18"/>
</dbReference>
<dbReference type="GeneID" id="83945"/>
<dbReference type="KEGG" id="mmu:83945"/>
<dbReference type="UCSC" id="uc007yac.2">
    <molecule id="Q99M87-1"/>
    <property type="organism name" value="mouse"/>
</dbReference>
<dbReference type="UCSC" id="uc012aat.1">
    <molecule id="Q99M87-3"/>
    <property type="organism name" value="mouse"/>
</dbReference>
<dbReference type="AGR" id="MGI:1933786"/>
<dbReference type="CTD" id="9093"/>
<dbReference type="MGI" id="MGI:1933786">
    <property type="gene designation" value="Dnaja3"/>
</dbReference>
<dbReference type="VEuPathDB" id="HostDB:ENSMUSG00000004069"/>
<dbReference type="eggNOG" id="KOG0715">
    <property type="taxonomic scope" value="Eukaryota"/>
</dbReference>
<dbReference type="GeneTree" id="ENSGT00940000155280"/>
<dbReference type="HOGENOM" id="CLU_017633_0_5_1"/>
<dbReference type="InParanoid" id="Q99M87"/>
<dbReference type="OMA" id="MATDYYA"/>
<dbReference type="OrthoDB" id="10256793at2759"/>
<dbReference type="PhylomeDB" id="Q99M87"/>
<dbReference type="TreeFam" id="TF105152"/>
<dbReference type="BioGRID-ORCS" id="83945">
    <property type="hits" value="23 hits in 78 CRISPR screens"/>
</dbReference>
<dbReference type="CD-CODE" id="CE726F99">
    <property type="entry name" value="Postsynaptic density"/>
</dbReference>
<dbReference type="ChiTaRS" id="Dnaja3">
    <property type="organism name" value="mouse"/>
</dbReference>
<dbReference type="PRO" id="PR:Q99M87"/>
<dbReference type="Proteomes" id="UP000000589">
    <property type="component" value="Chromosome 16"/>
</dbReference>
<dbReference type="RNAct" id="Q99M87">
    <property type="molecule type" value="protein"/>
</dbReference>
<dbReference type="Bgee" id="ENSMUSG00000004069">
    <property type="expression patterns" value="Expressed in interventricular septum and 258 other cell types or tissues"/>
</dbReference>
<dbReference type="ExpressionAtlas" id="Q99M87">
    <property type="expression patterns" value="baseline and differential"/>
</dbReference>
<dbReference type="GO" id="GO:0005884">
    <property type="term" value="C:actin filament"/>
    <property type="evidence" value="ECO:0007669"/>
    <property type="project" value="Ensembl"/>
</dbReference>
<dbReference type="GO" id="GO:0009898">
    <property type="term" value="C:cytoplasmic side of plasma membrane"/>
    <property type="evidence" value="ECO:0000314"/>
    <property type="project" value="UniProtKB"/>
</dbReference>
<dbReference type="GO" id="GO:0005829">
    <property type="term" value="C:cytosol"/>
    <property type="evidence" value="ECO:0000314"/>
    <property type="project" value="UniProtKB"/>
</dbReference>
<dbReference type="GO" id="GO:0042645">
    <property type="term" value="C:mitochondrial nucleoid"/>
    <property type="evidence" value="ECO:0007669"/>
    <property type="project" value="Ensembl"/>
</dbReference>
<dbReference type="GO" id="GO:0005739">
    <property type="term" value="C:mitochondrion"/>
    <property type="evidence" value="ECO:0000314"/>
    <property type="project" value="MGI"/>
</dbReference>
<dbReference type="GO" id="GO:0031594">
    <property type="term" value="C:neuromuscular junction"/>
    <property type="evidence" value="ECO:0000314"/>
    <property type="project" value="UniProtKB"/>
</dbReference>
<dbReference type="GO" id="GO:0005634">
    <property type="term" value="C:nucleus"/>
    <property type="evidence" value="ECO:0000314"/>
    <property type="project" value="MGI"/>
</dbReference>
<dbReference type="GO" id="GO:0005886">
    <property type="term" value="C:plasma membrane"/>
    <property type="evidence" value="ECO:0007669"/>
    <property type="project" value="GOC"/>
</dbReference>
<dbReference type="GO" id="GO:0045211">
    <property type="term" value="C:postsynaptic membrane"/>
    <property type="evidence" value="ECO:0000314"/>
    <property type="project" value="UniProtKB"/>
</dbReference>
<dbReference type="GO" id="GO:0005524">
    <property type="term" value="F:ATP binding"/>
    <property type="evidence" value="ECO:0007669"/>
    <property type="project" value="InterPro"/>
</dbReference>
<dbReference type="GO" id="GO:0030695">
    <property type="term" value="F:GTPase regulator activity"/>
    <property type="evidence" value="ECO:0000314"/>
    <property type="project" value="MGI"/>
</dbReference>
<dbReference type="GO" id="GO:0030544">
    <property type="term" value="F:Hsp70 protein binding"/>
    <property type="evidence" value="ECO:0007669"/>
    <property type="project" value="Ensembl"/>
</dbReference>
<dbReference type="GO" id="GO:0030971">
    <property type="term" value="F:receptor tyrosine kinase binding"/>
    <property type="evidence" value="ECO:0000353"/>
    <property type="project" value="UniProtKB"/>
</dbReference>
<dbReference type="GO" id="GO:0051082">
    <property type="term" value="F:unfolded protein binding"/>
    <property type="evidence" value="ECO:0000353"/>
    <property type="project" value="MGI"/>
</dbReference>
<dbReference type="GO" id="GO:0008270">
    <property type="term" value="F:zinc ion binding"/>
    <property type="evidence" value="ECO:0007669"/>
    <property type="project" value="UniProtKB-KW"/>
</dbReference>
<dbReference type="GO" id="GO:0006924">
    <property type="term" value="P:activation-induced cell death of T cells"/>
    <property type="evidence" value="ECO:0000315"/>
    <property type="project" value="MGI"/>
</dbReference>
<dbReference type="GO" id="GO:0006915">
    <property type="term" value="P:apoptotic process"/>
    <property type="evidence" value="ECO:0000315"/>
    <property type="project" value="MGI"/>
</dbReference>
<dbReference type="GO" id="GO:0090398">
    <property type="term" value="P:cellular senescence"/>
    <property type="evidence" value="ECO:0000314"/>
    <property type="project" value="MGI"/>
</dbReference>
<dbReference type="GO" id="GO:0006264">
    <property type="term" value="P:mitochondrial DNA replication"/>
    <property type="evidence" value="ECO:0000315"/>
    <property type="project" value="MGI"/>
</dbReference>
<dbReference type="GO" id="GO:0007005">
    <property type="term" value="P:mitochondrion organization"/>
    <property type="evidence" value="ECO:0000315"/>
    <property type="project" value="MGI"/>
</dbReference>
<dbReference type="GO" id="GO:0008285">
    <property type="term" value="P:negative regulation of cell population proliferation"/>
    <property type="evidence" value="ECO:0007669"/>
    <property type="project" value="Ensembl"/>
</dbReference>
<dbReference type="GO" id="GO:0043069">
    <property type="term" value="P:negative regulation of programmed cell death"/>
    <property type="evidence" value="ECO:0000315"/>
    <property type="project" value="MGI"/>
</dbReference>
<dbReference type="GO" id="GO:0000122">
    <property type="term" value="P:negative regulation of transcription by RNA polymerase II"/>
    <property type="evidence" value="ECO:0007669"/>
    <property type="project" value="Ensembl"/>
</dbReference>
<dbReference type="GO" id="GO:0007528">
    <property type="term" value="P:neuromuscular junction development"/>
    <property type="evidence" value="ECO:0000315"/>
    <property type="project" value="UniProtKB"/>
</dbReference>
<dbReference type="GO" id="GO:0042102">
    <property type="term" value="P:positive regulation of T cell proliferation"/>
    <property type="evidence" value="ECO:0000315"/>
    <property type="project" value="MGI"/>
</dbReference>
<dbReference type="GO" id="GO:0006457">
    <property type="term" value="P:protein folding"/>
    <property type="evidence" value="ECO:0007669"/>
    <property type="project" value="InterPro"/>
</dbReference>
<dbReference type="GO" id="GO:0009408">
    <property type="term" value="P:response to heat"/>
    <property type="evidence" value="ECO:0007669"/>
    <property type="project" value="InterPro"/>
</dbReference>
<dbReference type="GO" id="GO:0071340">
    <property type="term" value="P:skeletal muscle acetylcholine-gated channel clustering"/>
    <property type="evidence" value="ECO:0000315"/>
    <property type="project" value="UniProtKB"/>
</dbReference>
<dbReference type="GO" id="GO:0007264">
    <property type="term" value="P:small GTPase-mediated signal transduction"/>
    <property type="evidence" value="ECO:0000314"/>
    <property type="project" value="MGI"/>
</dbReference>
<dbReference type="GO" id="GO:0033077">
    <property type="term" value="P:T cell differentiation in thymus"/>
    <property type="evidence" value="ECO:0000315"/>
    <property type="project" value="MGI"/>
</dbReference>
<dbReference type="CDD" id="cd06257">
    <property type="entry name" value="DnaJ"/>
    <property type="match status" value="1"/>
</dbReference>
<dbReference type="CDD" id="cd10747">
    <property type="entry name" value="DnaJ_C"/>
    <property type="match status" value="1"/>
</dbReference>
<dbReference type="CDD" id="cd10719">
    <property type="entry name" value="DnaJ_zf"/>
    <property type="match status" value="1"/>
</dbReference>
<dbReference type="FunFam" id="2.60.260.20:FF:000005">
    <property type="entry name" value="Chaperone protein dnaJ 1, mitochondrial"/>
    <property type="match status" value="1"/>
</dbReference>
<dbReference type="FunFam" id="2.10.230.10:FF:000003">
    <property type="entry name" value="dnaJ homolog subfamily A member 3, mitochondrial"/>
    <property type="match status" value="1"/>
</dbReference>
<dbReference type="FunFam" id="1.10.287.110:FF:000025">
    <property type="entry name" value="dnaJ homolog subfamily A member 3, mitochondrial isoform X2"/>
    <property type="match status" value="1"/>
</dbReference>
<dbReference type="Gene3D" id="1.10.287.110">
    <property type="entry name" value="DnaJ domain"/>
    <property type="match status" value="1"/>
</dbReference>
<dbReference type="Gene3D" id="2.10.230.10">
    <property type="entry name" value="Heat shock protein DnaJ, cysteine-rich domain"/>
    <property type="match status" value="1"/>
</dbReference>
<dbReference type="Gene3D" id="2.60.260.20">
    <property type="entry name" value="Urease metallochaperone UreE, N-terminal domain"/>
    <property type="match status" value="2"/>
</dbReference>
<dbReference type="HAMAP" id="MF_01152">
    <property type="entry name" value="DnaJ"/>
    <property type="match status" value="1"/>
</dbReference>
<dbReference type="InterPro" id="IPR051938">
    <property type="entry name" value="Apopto_cytoskel_mod"/>
</dbReference>
<dbReference type="InterPro" id="IPR012724">
    <property type="entry name" value="DnaJ"/>
</dbReference>
<dbReference type="InterPro" id="IPR002939">
    <property type="entry name" value="DnaJ_C"/>
</dbReference>
<dbReference type="InterPro" id="IPR001623">
    <property type="entry name" value="DnaJ_domain"/>
</dbReference>
<dbReference type="InterPro" id="IPR018253">
    <property type="entry name" value="DnaJ_domain_CS"/>
</dbReference>
<dbReference type="InterPro" id="IPR008971">
    <property type="entry name" value="HSP40/DnaJ_pept-bd"/>
</dbReference>
<dbReference type="InterPro" id="IPR001305">
    <property type="entry name" value="HSP_DnaJ_Cys-rich_dom"/>
</dbReference>
<dbReference type="InterPro" id="IPR036410">
    <property type="entry name" value="HSP_DnaJ_Cys-rich_dom_sf"/>
</dbReference>
<dbReference type="InterPro" id="IPR036869">
    <property type="entry name" value="J_dom_sf"/>
</dbReference>
<dbReference type="PANTHER" id="PTHR44145">
    <property type="entry name" value="DNAJ HOMOLOG SUBFAMILY A MEMBER 3, MITOCHONDRIAL"/>
    <property type="match status" value="1"/>
</dbReference>
<dbReference type="PANTHER" id="PTHR44145:SF3">
    <property type="entry name" value="DNAJ HOMOLOG SUBFAMILY A MEMBER 3, MITOCHONDRIAL"/>
    <property type="match status" value="1"/>
</dbReference>
<dbReference type="Pfam" id="PF00226">
    <property type="entry name" value="DnaJ"/>
    <property type="match status" value="1"/>
</dbReference>
<dbReference type="Pfam" id="PF01556">
    <property type="entry name" value="DnaJ_C"/>
    <property type="match status" value="1"/>
</dbReference>
<dbReference type="Pfam" id="PF00684">
    <property type="entry name" value="DnaJ_CXXCXGXG"/>
    <property type="match status" value="1"/>
</dbReference>
<dbReference type="PRINTS" id="PR00625">
    <property type="entry name" value="JDOMAIN"/>
</dbReference>
<dbReference type="SMART" id="SM00271">
    <property type="entry name" value="DnaJ"/>
    <property type="match status" value="1"/>
</dbReference>
<dbReference type="SUPFAM" id="SSF46565">
    <property type="entry name" value="Chaperone J-domain"/>
    <property type="match status" value="1"/>
</dbReference>
<dbReference type="SUPFAM" id="SSF57938">
    <property type="entry name" value="DnaJ/Hsp40 cysteine-rich domain"/>
    <property type="match status" value="1"/>
</dbReference>
<dbReference type="SUPFAM" id="SSF49493">
    <property type="entry name" value="HSP40/DnaJ peptide-binding domain"/>
    <property type="match status" value="2"/>
</dbReference>
<dbReference type="PROSITE" id="PS00636">
    <property type="entry name" value="DNAJ_1"/>
    <property type="match status" value="1"/>
</dbReference>
<dbReference type="PROSITE" id="PS50076">
    <property type="entry name" value="DNAJ_2"/>
    <property type="match status" value="1"/>
</dbReference>
<dbReference type="PROSITE" id="PS51188">
    <property type="entry name" value="ZF_CR"/>
    <property type="match status" value="1"/>
</dbReference>
<name>DNJA3_MOUSE</name>
<evidence type="ECO:0000250" key="1"/>
<evidence type="ECO:0000250" key="2">
    <source>
        <dbReference type="UniProtKB" id="Q96EY1"/>
    </source>
</evidence>
<evidence type="ECO:0000255" key="3"/>
<evidence type="ECO:0000256" key="4">
    <source>
        <dbReference type="SAM" id="MobiDB-lite"/>
    </source>
</evidence>
<evidence type="ECO:0000269" key="5">
    <source>
    </source>
</evidence>
<evidence type="ECO:0000269" key="6">
    <source>
    </source>
</evidence>
<evidence type="ECO:0000303" key="7">
    <source>
    </source>
</evidence>
<evidence type="ECO:0000303" key="8">
    <source>
    </source>
</evidence>
<evidence type="ECO:0000303" key="9">
    <source>
    </source>
</evidence>
<evidence type="ECO:0000305" key="10"/>
<evidence type="ECO:0007744" key="11">
    <source>
    </source>
</evidence>
<protein>
    <recommendedName>
        <fullName>DnaJ homolog subfamily A member 3, mitochondrial</fullName>
    </recommendedName>
    <alternativeName>
        <fullName>DnaJ protein Tid-1</fullName>
        <shortName>mTid-1</shortName>
    </alternativeName>
    <alternativeName>
        <fullName>Tumorous imaginal discs protein Tid56 homolog</fullName>
    </alternativeName>
</protein>